<name>RL30_ECO7I</name>
<protein>
    <recommendedName>
        <fullName evidence="1">Large ribosomal subunit protein uL30</fullName>
    </recommendedName>
    <alternativeName>
        <fullName evidence="2">50S ribosomal protein L30</fullName>
    </alternativeName>
</protein>
<proteinExistence type="inferred from homology"/>
<gene>
    <name evidence="1" type="primary">rpmD</name>
    <name type="ordered locus">ECIAI39_3796</name>
</gene>
<keyword id="KW-0687">Ribonucleoprotein</keyword>
<keyword id="KW-0689">Ribosomal protein</keyword>
<dbReference type="EMBL" id="CU928164">
    <property type="protein sequence ID" value="CAR19910.1"/>
    <property type="molecule type" value="Genomic_DNA"/>
</dbReference>
<dbReference type="RefSeq" id="WP_001140433.1">
    <property type="nucleotide sequence ID" value="NC_011750.1"/>
</dbReference>
<dbReference type="RefSeq" id="YP_002409693.1">
    <property type="nucleotide sequence ID" value="NC_011750.1"/>
</dbReference>
<dbReference type="SMR" id="B7NLM1"/>
<dbReference type="STRING" id="585057.ECIAI39_3796"/>
<dbReference type="GeneID" id="93778685"/>
<dbReference type="KEGG" id="ect:ECIAI39_3796"/>
<dbReference type="PATRIC" id="fig|585057.6.peg.3933"/>
<dbReference type="HOGENOM" id="CLU_131047_1_4_6"/>
<dbReference type="Proteomes" id="UP000000749">
    <property type="component" value="Chromosome"/>
</dbReference>
<dbReference type="GO" id="GO:0022625">
    <property type="term" value="C:cytosolic large ribosomal subunit"/>
    <property type="evidence" value="ECO:0007669"/>
    <property type="project" value="TreeGrafter"/>
</dbReference>
<dbReference type="GO" id="GO:0003735">
    <property type="term" value="F:structural constituent of ribosome"/>
    <property type="evidence" value="ECO:0007669"/>
    <property type="project" value="InterPro"/>
</dbReference>
<dbReference type="GO" id="GO:0006412">
    <property type="term" value="P:translation"/>
    <property type="evidence" value="ECO:0007669"/>
    <property type="project" value="UniProtKB-UniRule"/>
</dbReference>
<dbReference type="CDD" id="cd01658">
    <property type="entry name" value="Ribosomal_L30"/>
    <property type="match status" value="1"/>
</dbReference>
<dbReference type="FunFam" id="3.30.1390.20:FF:000001">
    <property type="entry name" value="50S ribosomal protein L30"/>
    <property type="match status" value="1"/>
</dbReference>
<dbReference type="Gene3D" id="3.30.1390.20">
    <property type="entry name" value="Ribosomal protein L30, ferredoxin-like fold domain"/>
    <property type="match status" value="1"/>
</dbReference>
<dbReference type="HAMAP" id="MF_01371_B">
    <property type="entry name" value="Ribosomal_uL30_B"/>
    <property type="match status" value="1"/>
</dbReference>
<dbReference type="InterPro" id="IPR036919">
    <property type="entry name" value="Ribo_uL30_ferredoxin-like_sf"/>
</dbReference>
<dbReference type="InterPro" id="IPR005996">
    <property type="entry name" value="Ribosomal_uL30_bac-type"/>
</dbReference>
<dbReference type="InterPro" id="IPR018038">
    <property type="entry name" value="Ribosomal_uL30_CS"/>
</dbReference>
<dbReference type="InterPro" id="IPR016082">
    <property type="entry name" value="Ribosomal_uL30_ferredoxin-like"/>
</dbReference>
<dbReference type="NCBIfam" id="TIGR01308">
    <property type="entry name" value="rpmD_bact"/>
    <property type="match status" value="1"/>
</dbReference>
<dbReference type="PANTHER" id="PTHR15892:SF2">
    <property type="entry name" value="LARGE RIBOSOMAL SUBUNIT PROTEIN UL30M"/>
    <property type="match status" value="1"/>
</dbReference>
<dbReference type="PANTHER" id="PTHR15892">
    <property type="entry name" value="MITOCHONDRIAL RIBOSOMAL PROTEIN L30"/>
    <property type="match status" value="1"/>
</dbReference>
<dbReference type="Pfam" id="PF00327">
    <property type="entry name" value="Ribosomal_L30"/>
    <property type="match status" value="1"/>
</dbReference>
<dbReference type="PIRSF" id="PIRSF002211">
    <property type="entry name" value="Ribosomal_L30_bac-type"/>
    <property type="match status" value="1"/>
</dbReference>
<dbReference type="SUPFAM" id="SSF55129">
    <property type="entry name" value="Ribosomal protein L30p/L7e"/>
    <property type="match status" value="1"/>
</dbReference>
<dbReference type="PROSITE" id="PS00634">
    <property type="entry name" value="RIBOSOMAL_L30"/>
    <property type="match status" value="1"/>
</dbReference>
<organism>
    <name type="scientific">Escherichia coli O7:K1 (strain IAI39 / ExPEC)</name>
    <dbReference type="NCBI Taxonomy" id="585057"/>
    <lineage>
        <taxon>Bacteria</taxon>
        <taxon>Pseudomonadati</taxon>
        <taxon>Pseudomonadota</taxon>
        <taxon>Gammaproteobacteria</taxon>
        <taxon>Enterobacterales</taxon>
        <taxon>Enterobacteriaceae</taxon>
        <taxon>Escherichia</taxon>
    </lineage>
</organism>
<feature type="chain" id="PRO_1000144677" description="Large ribosomal subunit protein uL30">
    <location>
        <begin position="1"/>
        <end position="59"/>
    </location>
</feature>
<accession>B7NLM1</accession>
<evidence type="ECO:0000255" key="1">
    <source>
        <dbReference type="HAMAP-Rule" id="MF_01371"/>
    </source>
</evidence>
<evidence type="ECO:0000305" key="2"/>
<reference key="1">
    <citation type="journal article" date="2009" name="PLoS Genet.">
        <title>Organised genome dynamics in the Escherichia coli species results in highly diverse adaptive paths.</title>
        <authorList>
            <person name="Touchon M."/>
            <person name="Hoede C."/>
            <person name="Tenaillon O."/>
            <person name="Barbe V."/>
            <person name="Baeriswyl S."/>
            <person name="Bidet P."/>
            <person name="Bingen E."/>
            <person name="Bonacorsi S."/>
            <person name="Bouchier C."/>
            <person name="Bouvet O."/>
            <person name="Calteau A."/>
            <person name="Chiapello H."/>
            <person name="Clermont O."/>
            <person name="Cruveiller S."/>
            <person name="Danchin A."/>
            <person name="Diard M."/>
            <person name="Dossat C."/>
            <person name="Karoui M.E."/>
            <person name="Frapy E."/>
            <person name="Garry L."/>
            <person name="Ghigo J.M."/>
            <person name="Gilles A.M."/>
            <person name="Johnson J."/>
            <person name="Le Bouguenec C."/>
            <person name="Lescat M."/>
            <person name="Mangenot S."/>
            <person name="Martinez-Jehanne V."/>
            <person name="Matic I."/>
            <person name="Nassif X."/>
            <person name="Oztas S."/>
            <person name="Petit M.A."/>
            <person name="Pichon C."/>
            <person name="Rouy Z."/>
            <person name="Ruf C.S."/>
            <person name="Schneider D."/>
            <person name="Tourret J."/>
            <person name="Vacherie B."/>
            <person name="Vallenet D."/>
            <person name="Medigue C."/>
            <person name="Rocha E.P.C."/>
            <person name="Denamur E."/>
        </authorList>
    </citation>
    <scope>NUCLEOTIDE SEQUENCE [LARGE SCALE GENOMIC DNA]</scope>
    <source>
        <strain>IAI39 / ExPEC</strain>
    </source>
</reference>
<comment type="subunit">
    <text evidence="1">Part of the 50S ribosomal subunit.</text>
</comment>
<comment type="similarity">
    <text evidence="1">Belongs to the universal ribosomal protein uL30 family.</text>
</comment>
<sequence length="59" mass="6542">MAKTIKITQTRSAIGRLPKHKATLLGLGLRRIGHTVEREDTPAIRGMINAVSFMVKVEE</sequence>